<comment type="function">
    <text evidence="1">Required to coordinate membrane tubulation with reorganization of the actin cytoskeleton during endocytosis. Also acts as a link between CDC42 signaling and regulation of the actin cytoskeleton. Binds to lipids such as phosphatidylinositol 4,5-bisphosphate and phosphatidylserine and promotes membrane invagination and the formation of tubules. Also enhances actin polymerization in the vicinity of membrane tubules by recruiting WASL/N-WASP which in turn activates the Arp2/3 complex. Actin polymerization and dynamin may promote the fission of membrane tubules to form endocytic vesicles. Required for the formation of podosomes, actin-rich adhesion structures specific to monocyte-derived cells. Required for translocation of GLUT4 to the plasma membrane in response to insulin signaling. May be required for the lysosomal retention of FASLG/FASL (By similarity).</text>
</comment>
<comment type="subunit">
    <text evidence="1">Homodimerizes, the dimers can polymerize end-to-end to form filamentous structures. Interacts with AKAP9, ARHGAP17, DAAM1, DIAPH1, DIAPH2, DNM1, FASLG/FASL, GAPVD1, LYN, microtubules, PDE6G, SRC and WAS/WASP. Interacts with the ligand binding domain of the thyroid receptor (TR) in the presence of thyroid hormone. May interact with CTNNB1 and HD/HTT (By similarity). Interacts specifically with GTP-bound CDC42 and RHOQ. Interacts with DNM2 and WASL (By similarity).</text>
</comment>
<comment type="subcellular location">
    <subcellularLocation>
        <location evidence="1">Cytoplasm</location>
        <location evidence="1">Cytoskeleton</location>
    </subcellularLocation>
    <subcellularLocation>
        <location evidence="1">Cytoplasm</location>
        <location evidence="1">Cell cortex</location>
    </subcellularLocation>
    <subcellularLocation>
        <location evidence="1">Lysosome</location>
    </subcellularLocation>
    <subcellularLocation>
        <location evidence="1">Golgi apparatus</location>
    </subcellularLocation>
    <subcellularLocation>
        <location evidence="1">Cell membrane</location>
    </subcellularLocation>
    <subcellularLocation>
        <location evidence="1">Cell projection</location>
        <location evidence="1">Phagocytic cup</location>
    </subcellularLocation>
    <text evidence="1">Localizes to cortical regions coincident with F-actin, to lysosomes and to sites of phagocytosis in macrophages. Also localizes to the Golgi, and this requires AKAP9. Translocates to the plasma membrane in response to insulin stimulation, and this may require active RHOQ (By similarity).</text>
</comment>
<comment type="domain">
    <text evidence="1">The F-BAR domain binds the phospholipid membrane with its concave surface. The end-to-end polymerization of dimers of these domains provides a curved surface that fits best membranes with around 600 A diameter, and may drive tubulation (By similarity).</text>
</comment>
<comment type="PTM">
    <text evidence="1">Tyrosine phosphorylated. Also phosphorylated by PKA (By similarity).</text>
</comment>
<comment type="similarity">
    <text evidence="7">Belongs to the FNBP1 family.</text>
</comment>
<dbReference type="EMBL" id="CR858279">
    <property type="protein sequence ID" value="CAH90516.1"/>
    <property type="molecule type" value="mRNA"/>
</dbReference>
<dbReference type="RefSeq" id="NP_001125273.1">
    <property type="nucleotide sequence ID" value="NM_001131801.1"/>
</dbReference>
<dbReference type="BMRB" id="Q5RCJ1"/>
<dbReference type="SMR" id="Q5RCJ1"/>
<dbReference type="FunCoup" id="Q5RCJ1">
    <property type="interactions" value="2197"/>
</dbReference>
<dbReference type="STRING" id="9601.ENSPPYP00000010610"/>
<dbReference type="GeneID" id="100172170"/>
<dbReference type="KEGG" id="pon:100172170"/>
<dbReference type="CTD" id="9322"/>
<dbReference type="eggNOG" id="KOG3565">
    <property type="taxonomic scope" value="Eukaryota"/>
</dbReference>
<dbReference type="InParanoid" id="Q5RCJ1"/>
<dbReference type="OrthoDB" id="8783038at2759"/>
<dbReference type="Proteomes" id="UP000001595">
    <property type="component" value="Unplaced"/>
</dbReference>
<dbReference type="GO" id="GO:0005938">
    <property type="term" value="C:cell cortex"/>
    <property type="evidence" value="ECO:0007669"/>
    <property type="project" value="UniProtKB-SubCell"/>
</dbReference>
<dbReference type="GO" id="GO:0042995">
    <property type="term" value="C:cell projection"/>
    <property type="evidence" value="ECO:0007669"/>
    <property type="project" value="UniProtKB-KW"/>
</dbReference>
<dbReference type="GO" id="GO:0005856">
    <property type="term" value="C:cytoskeleton"/>
    <property type="evidence" value="ECO:0007669"/>
    <property type="project" value="UniProtKB-SubCell"/>
</dbReference>
<dbReference type="GO" id="GO:0005794">
    <property type="term" value="C:Golgi apparatus"/>
    <property type="evidence" value="ECO:0007669"/>
    <property type="project" value="UniProtKB-SubCell"/>
</dbReference>
<dbReference type="GO" id="GO:0005764">
    <property type="term" value="C:lysosome"/>
    <property type="evidence" value="ECO:0007669"/>
    <property type="project" value="UniProtKB-SubCell"/>
</dbReference>
<dbReference type="GO" id="GO:0001891">
    <property type="term" value="C:phagocytic cup"/>
    <property type="evidence" value="ECO:0007669"/>
    <property type="project" value="UniProtKB-SubCell"/>
</dbReference>
<dbReference type="GO" id="GO:0008289">
    <property type="term" value="F:lipid binding"/>
    <property type="evidence" value="ECO:0007669"/>
    <property type="project" value="UniProtKB-KW"/>
</dbReference>
<dbReference type="GO" id="GO:0006897">
    <property type="term" value="P:endocytosis"/>
    <property type="evidence" value="ECO:0007669"/>
    <property type="project" value="UniProtKB-KW"/>
</dbReference>
<dbReference type="GO" id="GO:0007165">
    <property type="term" value="P:signal transduction"/>
    <property type="evidence" value="ECO:0007669"/>
    <property type="project" value="InterPro"/>
</dbReference>
<dbReference type="CDD" id="cd07653">
    <property type="entry name" value="F-BAR_CIP4-like"/>
    <property type="match status" value="1"/>
</dbReference>
<dbReference type="CDD" id="cd11628">
    <property type="entry name" value="HR1_CIP4_FNBP1L"/>
    <property type="match status" value="1"/>
</dbReference>
<dbReference type="CDD" id="cd11911">
    <property type="entry name" value="SH3_CIP4-like"/>
    <property type="match status" value="1"/>
</dbReference>
<dbReference type="FunFam" id="1.20.1270.60:FF:000002">
    <property type="entry name" value="Formin-binding protein 1-like isoform 1"/>
    <property type="match status" value="1"/>
</dbReference>
<dbReference type="FunFam" id="2.30.30.40:FF:000017">
    <property type="entry name" value="Formin-binding protein 1-like isoform 1"/>
    <property type="match status" value="1"/>
</dbReference>
<dbReference type="Gene3D" id="6.10.140.470">
    <property type="match status" value="1"/>
</dbReference>
<dbReference type="Gene3D" id="1.20.1270.60">
    <property type="entry name" value="Arfaptin homology (AH) domain/BAR domain"/>
    <property type="match status" value="1"/>
</dbReference>
<dbReference type="Gene3D" id="2.30.30.40">
    <property type="entry name" value="SH3 Domains"/>
    <property type="match status" value="1"/>
</dbReference>
<dbReference type="InterPro" id="IPR027267">
    <property type="entry name" value="AH/BAR_dom_sf"/>
</dbReference>
<dbReference type="InterPro" id="IPR031160">
    <property type="entry name" value="F_BAR"/>
</dbReference>
<dbReference type="InterPro" id="IPR001060">
    <property type="entry name" value="FCH_dom"/>
</dbReference>
<dbReference type="InterPro" id="IPR011072">
    <property type="entry name" value="HR1_rho-bd"/>
</dbReference>
<dbReference type="InterPro" id="IPR036028">
    <property type="entry name" value="SH3-like_dom_sf"/>
</dbReference>
<dbReference type="InterPro" id="IPR001452">
    <property type="entry name" value="SH3_domain"/>
</dbReference>
<dbReference type="PANTHER" id="PTHR15735:SF17">
    <property type="entry name" value="CDC42-INTERACTING PROTEIN 4"/>
    <property type="match status" value="1"/>
</dbReference>
<dbReference type="PANTHER" id="PTHR15735">
    <property type="entry name" value="FCH AND DOUBLE SH3 DOMAINS PROTEIN"/>
    <property type="match status" value="1"/>
</dbReference>
<dbReference type="Pfam" id="PF00611">
    <property type="entry name" value="FCH"/>
    <property type="match status" value="1"/>
</dbReference>
<dbReference type="Pfam" id="PF00018">
    <property type="entry name" value="SH3_1"/>
    <property type="match status" value="1"/>
</dbReference>
<dbReference type="SMART" id="SM00055">
    <property type="entry name" value="FCH"/>
    <property type="match status" value="1"/>
</dbReference>
<dbReference type="SMART" id="SM00326">
    <property type="entry name" value="SH3"/>
    <property type="match status" value="1"/>
</dbReference>
<dbReference type="SUPFAM" id="SSF103657">
    <property type="entry name" value="BAR/IMD domain-like"/>
    <property type="match status" value="1"/>
</dbReference>
<dbReference type="SUPFAM" id="SSF50044">
    <property type="entry name" value="SH3-domain"/>
    <property type="match status" value="1"/>
</dbReference>
<dbReference type="PROSITE" id="PS51741">
    <property type="entry name" value="F_BAR"/>
    <property type="match status" value="1"/>
</dbReference>
<dbReference type="PROSITE" id="PS51860">
    <property type="entry name" value="REM_1"/>
    <property type="match status" value="1"/>
</dbReference>
<dbReference type="PROSITE" id="PS50002">
    <property type="entry name" value="SH3"/>
    <property type="match status" value="1"/>
</dbReference>
<reference key="1">
    <citation type="submission" date="2004-11" db="EMBL/GenBank/DDBJ databases">
        <authorList>
            <consortium name="The German cDNA consortium"/>
        </authorList>
    </citation>
    <scope>NUCLEOTIDE SEQUENCE [LARGE SCALE MRNA]</scope>
    <source>
        <tissue>Heart</tissue>
    </source>
</reference>
<sequence>MDWGTELWDQFEVLERHTQWGLDLLDRYVKFVKERTEVEQAYAKQLRSLVKKYLPKRPAKDDPESKFSQQQSFVQILQEVNDFAGQRELVAENLSVRVCLELTKYSQEMKQERKMHFQEGRRAQQQLENGFKQLENSKRKFERDCREAEKAAQTAERLDQDINATKADVEKAKQQAHLRSHMAEESKNEYAAQLQRFNRDQAHFYFSQMPQIFDKLQDMDERRATRLGAGYGLLSEAELEVVPIIAKCLEGMKVAANAVDPKNDSQVLIELHKSGFARPGDVEFEDFSQPMNRAPSDSSLGTPSDGRPELRGPGRSRTKRWPFGKKNKPRPPPLSPLGGPVPSALPNGPPSPRSGRDPLAILSEISKSVKPRLASFRSLRGSRGTVVTEDFSHLPPEQQRKRLQQQLEERSRELQKEVDQREALKKMKDVYEKTPQMGDPASLEPQITETLSNIERLKLEVQKYEAWLAEAESRVLSNRGDSLSRHARPPDPPTSAPPDSSSNSASQDTKESSEEPPSEESQDTPIYTEFDEDFEEEPTSPIGHCVAIYHFEGSSEGTISMAEGEDLSLMEEDKGDGWTRVRRKEGGEGYVPTSYLRVTLN</sequence>
<organism>
    <name type="scientific">Pongo abelii</name>
    <name type="common">Sumatran orangutan</name>
    <name type="synonym">Pongo pygmaeus abelii</name>
    <dbReference type="NCBI Taxonomy" id="9601"/>
    <lineage>
        <taxon>Eukaryota</taxon>
        <taxon>Metazoa</taxon>
        <taxon>Chordata</taxon>
        <taxon>Craniata</taxon>
        <taxon>Vertebrata</taxon>
        <taxon>Euteleostomi</taxon>
        <taxon>Mammalia</taxon>
        <taxon>Eutheria</taxon>
        <taxon>Euarchontoglires</taxon>
        <taxon>Primates</taxon>
        <taxon>Haplorrhini</taxon>
        <taxon>Catarrhini</taxon>
        <taxon>Hominidae</taxon>
        <taxon>Pongo</taxon>
    </lineage>
</organism>
<proteinExistence type="evidence at transcript level"/>
<feature type="chain" id="PRO_0000261440" description="Cdc42-interacting protein 4">
    <location>
        <begin position="1"/>
        <end position="601"/>
    </location>
</feature>
<feature type="domain" description="F-BAR" evidence="4">
    <location>
        <begin position="1"/>
        <end position="264"/>
    </location>
</feature>
<feature type="domain" description="REM-1" evidence="5">
    <location>
        <begin position="393"/>
        <end position="470"/>
    </location>
</feature>
<feature type="domain" description="SH3" evidence="3">
    <location>
        <begin position="540"/>
        <end position="601"/>
    </location>
</feature>
<feature type="region of interest" description="Required for translocation to the plasma membrane in response to insulin, podosome formation and interaction with AKAP9 and microtubules" evidence="1">
    <location>
        <begin position="1"/>
        <end position="117"/>
    </location>
</feature>
<feature type="region of interest" description="Disordered" evidence="6">
    <location>
        <begin position="280"/>
        <end position="358"/>
    </location>
</feature>
<feature type="region of interest" description="Interaction with PDE6G" evidence="1">
    <location>
        <begin position="293"/>
        <end position="601"/>
    </location>
</feature>
<feature type="region of interest" description="Interaction with CDC42" evidence="1">
    <location>
        <begin position="293"/>
        <end position="537"/>
    </location>
</feature>
<feature type="region of interest" description="Disordered" evidence="6">
    <location>
        <begin position="390"/>
        <end position="420"/>
    </location>
</feature>
<feature type="region of interest" description="Required for interaction with FASLG and localization to lysosomes" evidence="1">
    <location>
        <begin position="471"/>
        <end position="601"/>
    </location>
</feature>
<feature type="region of interest" description="Disordered" evidence="6">
    <location>
        <begin position="478"/>
        <end position="543"/>
    </location>
</feature>
<feature type="region of interest" description="Interaction with DNM2 and WASL" evidence="1">
    <location>
        <begin position="487"/>
        <end position="541"/>
    </location>
</feature>
<feature type="region of interest" description="Interaction with DNM1 and WASL" evidence="1">
    <location>
        <begin position="529"/>
        <end position="601"/>
    </location>
</feature>
<feature type="region of interest" description="Required for podosome formation" evidence="1">
    <location>
        <begin position="538"/>
        <end position="601"/>
    </location>
</feature>
<feature type="region of interest" description="Interaction with WAS" evidence="1">
    <location>
        <begin position="544"/>
        <end position="601"/>
    </location>
</feature>
<feature type="region of interest" description="Interaction with ARHGAP17, DAAM1, DIAPH1 and DIAPH2" evidence="1">
    <location>
        <begin position="546"/>
        <end position="601"/>
    </location>
</feature>
<feature type="coiled-coil region" evidence="1">
    <location>
        <begin position="67"/>
        <end position="259"/>
    </location>
</feature>
<feature type="coiled-coil region" evidence="1">
    <location>
        <begin position="388"/>
        <end position="481"/>
    </location>
</feature>
<feature type="compositionally biased region" description="Polar residues" evidence="6">
    <location>
        <begin position="289"/>
        <end position="302"/>
    </location>
</feature>
<feature type="compositionally biased region" description="Basic residues" evidence="6">
    <location>
        <begin position="314"/>
        <end position="329"/>
    </location>
</feature>
<feature type="compositionally biased region" description="Low complexity" evidence="6">
    <location>
        <begin position="336"/>
        <end position="346"/>
    </location>
</feature>
<feature type="compositionally biased region" description="Basic and acidic residues" evidence="6">
    <location>
        <begin position="407"/>
        <end position="420"/>
    </location>
</feature>
<feature type="compositionally biased region" description="Low complexity" evidence="6">
    <location>
        <begin position="497"/>
        <end position="506"/>
    </location>
</feature>
<feature type="compositionally biased region" description="Acidic residues" evidence="6">
    <location>
        <begin position="529"/>
        <end position="538"/>
    </location>
</feature>
<feature type="site" description="Mediates end-to-end attachment of dimers" evidence="1">
    <location>
        <position position="166"/>
    </location>
</feature>
<feature type="modified residue" description="Phosphoserine" evidence="2">
    <location>
        <position position="296"/>
    </location>
</feature>
<feature type="modified residue" description="Phosphoserine" evidence="2">
    <location>
        <position position="298"/>
    </location>
</feature>
<feature type="modified residue" description="Phosphoserine" evidence="2">
    <location>
        <position position="299"/>
    </location>
</feature>
<feature type="modified residue" description="Phosphoserine" evidence="2">
    <location>
        <position position="335"/>
    </location>
</feature>
<feature type="modified residue" description="Phosphoserine" evidence="2">
    <location>
        <position position="351"/>
    </location>
</feature>
<feature type="modified residue" description="Phosphoserine" evidence="2">
    <location>
        <position position="482"/>
    </location>
</feature>
<name>CIP4_PONAB</name>
<evidence type="ECO:0000250" key="1"/>
<evidence type="ECO:0000250" key="2">
    <source>
        <dbReference type="UniProtKB" id="Q15642"/>
    </source>
</evidence>
<evidence type="ECO:0000255" key="3">
    <source>
        <dbReference type="PROSITE-ProRule" id="PRU00192"/>
    </source>
</evidence>
<evidence type="ECO:0000255" key="4">
    <source>
        <dbReference type="PROSITE-ProRule" id="PRU01077"/>
    </source>
</evidence>
<evidence type="ECO:0000255" key="5">
    <source>
        <dbReference type="PROSITE-ProRule" id="PRU01207"/>
    </source>
</evidence>
<evidence type="ECO:0000256" key="6">
    <source>
        <dbReference type="SAM" id="MobiDB-lite"/>
    </source>
</evidence>
<evidence type="ECO:0000305" key="7"/>
<keyword id="KW-1003">Cell membrane</keyword>
<keyword id="KW-0966">Cell projection</keyword>
<keyword id="KW-0175">Coiled coil</keyword>
<keyword id="KW-0963">Cytoplasm</keyword>
<keyword id="KW-0206">Cytoskeleton</keyword>
<keyword id="KW-0254">Endocytosis</keyword>
<keyword id="KW-0333">Golgi apparatus</keyword>
<keyword id="KW-0446">Lipid-binding</keyword>
<keyword id="KW-0458">Lysosome</keyword>
<keyword id="KW-0472">Membrane</keyword>
<keyword id="KW-0597">Phosphoprotein</keyword>
<keyword id="KW-1185">Reference proteome</keyword>
<keyword id="KW-0728">SH3 domain</keyword>
<protein>
    <recommendedName>
        <fullName>Cdc42-interacting protein 4</fullName>
    </recommendedName>
    <alternativeName>
        <fullName>Thyroid receptor-interacting protein 10</fullName>
        <shortName>TR-interacting protein 10</shortName>
        <shortName>TRIP-10</shortName>
    </alternativeName>
</protein>
<gene>
    <name type="primary">TRIP10</name>
    <name type="synonym">CIP4</name>
</gene>
<accession>Q5RCJ1</accession>